<proteinExistence type="inferred from homology"/>
<keyword id="KW-0067">ATP-binding</keyword>
<keyword id="KW-0143">Chaperone</keyword>
<keyword id="KW-0547">Nucleotide-binding</keyword>
<keyword id="KW-0597">Phosphoprotein</keyword>
<keyword id="KW-0346">Stress response</keyword>
<accession>A7Z6W1</accession>
<organism>
    <name type="scientific">Bacillus velezensis (strain DSM 23117 / BGSC 10A6 / LMG 26770 / FZB42)</name>
    <name type="common">Bacillus amyloliquefaciens subsp. plantarum</name>
    <dbReference type="NCBI Taxonomy" id="326423"/>
    <lineage>
        <taxon>Bacteria</taxon>
        <taxon>Bacillati</taxon>
        <taxon>Bacillota</taxon>
        <taxon>Bacilli</taxon>
        <taxon>Bacillales</taxon>
        <taxon>Bacillaceae</taxon>
        <taxon>Bacillus</taxon>
        <taxon>Bacillus amyloliquefaciens group</taxon>
    </lineage>
</organism>
<reference key="1">
    <citation type="journal article" date="2007" name="Nat. Biotechnol.">
        <title>Comparative analysis of the complete genome sequence of the plant growth-promoting bacterium Bacillus amyloliquefaciens FZB42.</title>
        <authorList>
            <person name="Chen X.H."/>
            <person name="Koumoutsi A."/>
            <person name="Scholz R."/>
            <person name="Eisenreich A."/>
            <person name="Schneider K."/>
            <person name="Heinemeyer I."/>
            <person name="Morgenstern B."/>
            <person name="Voss B."/>
            <person name="Hess W.R."/>
            <person name="Reva O."/>
            <person name="Junge H."/>
            <person name="Voigt B."/>
            <person name="Jungblut P.R."/>
            <person name="Vater J."/>
            <person name="Suessmuth R."/>
            <person name="Liesegang H."/>
            <person name="Strittmatter A."/>
            <person name="Gottschalk G."/>
            <person name="Borriss R."/>
        </authorList>
    </citation>
    <scope>NUCLEOTIDE SEQUENCE [LARGE SCALE GENOMIC DNA]</scope>
    <source>
        <strain>DSM 23117 / BGSC 10A6 / LMG 26770 / FZB42</strain>
    </source>
</reference>
<name>DNAK_BACVZ</name>
<comment type="function">
    <text evidence="1">Acts as a chaperone.</text>
</comment>
<comment type="induction">
    <text evidence="1">By stress conditions e.g. heat shock.</text>
</comment>
<comment type="similarity">
    <text evidence="1">Belongs to the heat shock protein 70 family.</text>
</comment>
<feature type="chain" id="PRO_1000059508" description="Chaperone protein DnaK">
    <location>
        <begin position="1"/>
        <end position="612"/>
    </location>
</feature>
<feature type="region of interest" description="Disordered" evidence="2">
    <location>
        <begin position="576"/>
        <end position="612"/>
    </location>
</feature>
<feature type="compositionally biased region" description="Low complexity" evidence="2">
    <location>
        <begin position="578"/>
        <end position="588"/>
    </location>
</feature>
<feature type="compositionally biased region" description="Acidic residues" evidence="2">
    <location>
        <begin position="596"/>
        <end position="612"/>
    </location>
</feature>
<feature type="modified residue" description="Phosphothreonine; by autocatalysis" evidence="1">
    <location>
        <position position="173"/>
    </location>
</feature>
<dbReference type="EMBL" id="CP000560">
    <property type="protein sequence ID" value="ABS74737.1"/>
    <property type="molecule type" value="Genomic_DNA"/>
</dbReference>
<dbReference type="RefSeq" id="WP_007408273.1">
    <property type="nucleotide sequence ID" value="NC_009725.2"/>
</dbReference>
<dbReference type="SMR" id="A7Z6W1"/>
<dbReference type="GeneID" id="93081515"/>
<dbReference type="KEGG" id="bay:RBAM_023770"/>
<dbReference type="HOGENOM" id="CLU_005965_2_4_9"/>
<dbReference type="Proteomes" id="UP000001120">
    <property type="component" value="Chromosome"/>
</dbReference>
<dbReference type="GO" id="GO:0005524">
    <property type="term" value="F:ATP binding"/>
    <property type="evidence" value="ECO:0007669"/>
    <property type="project" value="UniProtKB-UniRule"/>
</dbReference>
<dbReference type="GO" id="GO:0140662">
    <property type="term" value="F:ATP-dependent protein folding chaperone"/>
    <property type="evidence" value="ECO:0007669"/>
    <property type="project" value="InterPro"/>
</dbReference>
<dbReference type="GO" id="GO:0051082">
    <property type="term" value="F:unfolded protein binding"/>
    <property type="evidence" value="ECO:0007669"/>
    <property type="project" value="InterPro"/>
</dbReference>
<dbReference type="CDD" id="cd10234">
    <property type="entry name" value="ASKHA_NBD_HSP70_DnaK-like"/>
    <property type="match status" value="1"/>
</dbReference>
<dbReference type="FunFam" id="2.60.34.10:FF:000014">
    <property type="entry name" value="Chaperone protein DnaK HSP70"/>
    <property type="match status" value="1"/>
</dbReference>
<dbReference type="FunFam" id="1.20.1270.10:FF:000004">
    <property type="entry name" value="Molecular chaperone DnaK"/>
    <property type="match status" value="1"/>
</dbReference>
<dbReference type="FunFam" id="3.30.420.40:FF:000071">
    <property type="entry name" value="Molecular chaperone DnaK"/>
    <property type="match status" value="1"/>
</dbReference>
<dbReference type="FunFam" id="3.90.640.10:FF:000003">
    <property type="entry name" value="Molecular chaperone DnaK"/>
    <property type="match status" value="1"/>
</dbReference>
<dbReference type="Gene3D" id="1.20.1270.10">
    <property type="match status" value="1"/>
</dbReference>
<dbReference type="Gene3D" id="3.30.420.40">
    <property type="match status" value="2"/>
</dbReference>
<dbReference type="Gene3D" id="3.90.640.10">
    <property type="entry name" value="Actin, Chain A, domain 4"/>
    <property type="match status" value="1"/>
</dbReference>
<dbReference type="Gene3D" id="2.60.34.10">
    <property type="entry name" value="Substrate Binding Domain Of DNAk, Chain A, domain 1"/>
    <property type="match status" value="1"/>
</dbReference>
<dbReference type="HAMAP" id="MF_00332">
    <property type="entry name" value="DnaK"/>
    <property type="match status" value="1"/>
</dbReference>
<dbReference type="InterPro" id="IPR043129">
    <property type="entry name" value="ATPase_NBD"/>
</dbReference>
<dbReference type="InterPro" id="IPR012725">
    <property type="entry name" value="Chaperone_DnaK"/>
</dbReference>
<dbReference type="InterPro" id="IPR018181">
    <property type="entry name" value="Heat_shock_70_CS"/>
</dbReference>
<dbReference type="InterPro" id="IPR029048">
    <property type="entry name" value="HSP70_C_sf"/>
</dbReference>
<dbReference type="InterPro" id="IPR029047">
    <property type="entry name" value="HSP70_peptide-bd_sf"/>
</dbReference>
<dbReference type="InterPro" id="IPR013126">
    <property type="entry name" value="Hsp_70_fam"/>
</dbReference>
<dbReference type="NCBIfam" id="NF001413">
    <property type="entry name" value="PRK00290.1"/>
    <property type="match status" value="1"/>
</dbReference>
<dbReference type="NCBIfam" id="TIGR02350">
    <property type="entry name" value="prok_dnaK"/>
    <property type="match status" value="1"/>
</dbReference>
<dbReference type="PANTHER" id="PTHR19375">
    <property type="entry name" value="HEAT SHOCK PROTEIN 70KDA"/>
    <property type="match status" value="1"/>
</dbReference>
<dbReference type="Pfam" id="PF00012">
    <property type="entry name" value="HSP70"/>
    <property type="match status" value="1"/>
</dbReference>
<dbReference type="PRINTS" id="PR00301">
    <property type="entry name" value="HEATSHOCK70"/>
</dbReference>
<dbReference type="SUPFAM" id="SSF53067">
    <property type="entry name" value="Actin-like ATPase domain"/>
    <property type="match status" value="2"/>
</dbReference>
<dbReference type="SUPFAM" id="SSF100934">
    <property type="entry name" value="Heat shock protein 70kD (HSP70), C-terminal subdomain"/>
    <property type="match status" value="1"/>
</dbReference>
<dbReference type="SUPFAM" id="SSF100920">
    <property type="entry name" value="Heat shock protein 70kD (HSP70), peptide-binding domain"/>
    <property type="match status" value="1"/>
</dbReference>
<dbReference type="PROSITE" id="PS00297">
    <property type="entry name" value="HSP70_1"/>
    <property type="match status" value="1"/>
</dbReference>
<dbReference type="PROSITE" id="PS00329">
    <property type="entry name" value="HSP70_2"/>
    <property type="match status" value="1"/>
</dbReference>
<dbReference type="PROSITE" id="PS01036">
    <property type="entry name" value="HSP70_3"/>
    <property type="match status" value="1"/>
</dbReference>
<sequence>MSKVIGIDLGTTNSCVAVLEGGEPTVIANAEGNRTTPSVVAFKNGERQVGEVAKRQSITNPNTIMSVKRHMGTDYKVEIEGKDYTPQEVSAIILQHLKAYAESYLGETVSKAVITVPAYFNDAERQATKDAGKIAGLEVERIINEPTAAALAYGLDKTDEDQTILVYDLGGGTFDVSVLELGDGVFEVRSTAGDNRLGGDDFDQVIIDHLVAEFKKENGIDLSKDKMALQRLKDAAEKAKKDLSGVSSTQISLPFITAGEAGPLHLELTLTRAKFEELSAHLVERTMAPVRQALQDADLSASEIDKVILVGGSTRIPAVQEAIKKETGKEAHKGVNPDEVVALGAAIQGGVITGDVKDVVLLDVTPLSLGIETMGGVFTKLIDRNTTIPTSKSQVFSTAADNQTAVDIHVLQGERPMSADNKTLGRFQLTDIPPAPRGVPQIEVSFDIDKNGIVNVRAKDLGTGKEQNITIKSSSGLSDDEIERMVKEAEENADADAKRKEEIEVRNEADQLVFQTEKTLKDLEGKVDEEQVKKANDAKDALKAAIEKNEIEDIKAKKDELQTIVQELSMKLYEEAAKAQQAEGGANAEGKKADDNVVDAEYEEVKDDETKK</sequence>
<evidence type="ECO:0000255" key="1">
    <source>
        <dbReference type="HAMAP-Rule" id="MF_00332"/>
    </source>
</evidence>
<evidence type="ECO:0000256" key="2">
    <source>
        <dbReference type="SAM" id="MobiDB-lite"/>
    </source>
</evidence>
<protein>
    <recommendedName>
        <fullName evidence="1">Chaperone protein DnaK</fullName>
    </recommendedName>
    <alternativeName>
        <fullName evidence="1">HSP70</fullName>
    </alternativeName>
    <alternativeName>
        <fullName evidence="1">Heat shock 70 kDa protein</fullName>
    </alternativeName>
    <alternativeName>
        <fullName evidence="1">Heat shock protein 70</fullName>
    </alternativeName>
</protein>
<gene>
    <name evidence="1" type="primary">dnaK</name>
    <name type="ordered locus">RBAM_023770</name>
</gene>